<proteinExistence type="evidence at protein level"/>
<sequence>MNRKDIKRKSHQECSGKAGGRGRSRQARRHKTCPTPREISKVMASMNLGVLSESSCSEDELLEECIRCFDSAGSLRRGDHILKMVLTMHSWVLPSSELAARLLTSYQKAAKDAQELRQLQICYLVRYWLTHHHEAVHQEPQLEAVISRFWTTVAQEGNMAQRSLGDASSLLSPGGPGPPPPMSSPGLGKKRKVSLLFDHLETEELAQHLTYLEFRSFQAITPQDLRGYVLQGSVRGCPALEGSVGLSNSVSRWVQVMVLSRPGPAQRAQVLDKFIRVAQRLHQLQNFNTLMAVTGGLCHSAISRLKDSHVHLSPDSTKALLELTELLSSHNNYAHYRRTWAGCTGFRLPVLGVHLKDLVSLYEAHPDRLPDGRLHLPKLNSLYLRLQELMALQGQHPPCSANEDLLHLLTLSLDLFYTEDEIYELSYAREPRCPKSLPPSPFKAPVVVEWAQGVTPKPDSVTLGQHVEQLVESVFKNYDPEGRGSISLEDFERLSGNFPFACHGLHPPPRHGSGSFSREELTKYLLHASAICSKLGLAFLHAFQEVTFRKPTFCHSCSGFLWGVTKQGYRCRDCGLCCHRHCRDQVRVECKKRPETKGDPGPPGAPVPATSLPPANCGSEESLSYTLSPDPESGCHLRHAWTQTESSHSSWEPEVVPCPARVLPSRASSKPSV</sequence>
<comment type="function">
    <text evidence="6 8 9">Functions as a cation- and diacylglycerol (DAG)-regulated nucleotide exchange factor activating Ras through the exchange of bound GDP for GTP (PubMed:12817022, PubMed:22728827). In neutrophils, participates in a phospholipase C-activating N-formyl peptide-activated GPCR (G protein-coupled receptor) signaling pathway by promoting Ras-mediated activation of PIK3CG/PI3Kgamma to promote neutrophil functional responses (PubMed:22728827). In CD117(+) dendritic cells and mast cells, participates in an lipopolysaccharide (LPS)-activated signaling pathway that stimulates the production of interferon-gamma and other pro-inflammatory cytokines by natural killer (NK) cells (PubMed:26982501). May function in mast cell differentiation (PubMed:12817022). Does not appear to be required for the development of B-cells, DC-cells, T-cells, or NK-cells (PubMed:26982501).</text>
</comment>
<comment type="function">
    <molecule>Isoform 1</molecule>
    <text evidence="7">Binds diacylglycerol (DAG).</text>
</comment>
<comment type="function">
    <molecule>Isoform 2</molecule>
    <text evidence="7">Unable to bind diacylglycerol (DAG).</text>
</comment>
<comment type="subcellular location">
    <subcellularLocation>
        <location evidence="5">Cytoplasm</location>
    </subcellularLocation>
    <subcellularLocation>
        <location evidence="5 6">Cell membrane</location>
    </subcellularLocation>
    <text evidence="6">Recruited to membranes upon activation by DAG.</text>
</comment>
<comment type="alternative products">
    <event type="alternative splicing"/>
    <isoform>
        <id>Q8BTM9-1</id>
        <name>1</name>
        <name>RASGRP4alpha</name>
        <sequence type="displayed"/>
    </isoform>
    <isoform>
        <id>Q8BTM9-2</id>
        <name>2</name>
        <name>RASGRP4beta</name>
        <sequence type="described" ref="VSP_030483"/>
    </isoform>
    <isoform>
        <id>Q8BTM9-3</id>
        <name>3</name>
        <sequence type="described" ref="VSP_030484 VSP_030487"/>
    </isoform>
    <isoform>
        <id>Q8BTM9-4</id>
        <name>4</name>
        <sequence type="described" ref="VSP_030485 VSP_030486"/>
    </isoform>
</comment>
<comment type="tissue specificity">
    <text evidence="5 6 9">Expressed by mast cells and their progenitors (at protein level) (PubMed:11956218, PubMed:12817022, PubMed:26982501). Expressed by dendritic cells (PubMed:26982501).</text>
</comment>
<comment type="tissue specificity">
    <molecule>Isoform 1</molecule>
    <text evidence="14">Expressed in neutrophils.</text>
</comment>
<comment type="developmental stage">
    <text evidence="6">Expressed at all stages in the development of mast cells.</text>
</comment>
<comment type="induction">
    <text evidence="9">Repressed in CD117(+) splenocytes 12-24 hours following stimulation by lipopolysaccharide (LPS).</text>
</comment>
<comment type="domain">
    <text>The phorbol-ester/DAG-type zinc finger mediates the binding and the functional activation by DAG.</text>
</comment>
<comment type="miscellaneous">
    <molecule>Isoform 3</molecule>
    <text evidence="13">Due to an intron retention.</text>
</comment>
<comment type="miscellaneous">
    <molecule>Isoform 4</molecule>
    <text evidence="13">Minor isoform which is not activated by DAG and probably not functional. Preferentially expressed in the C3H/HeJ strain. May be produced at very low levels due to a premature stop codon in the mRNA, leading to nonsense-mediated mRNA decay.</text>
</comment>
<comment type="similarity">
    <text evidence="13">Belongs to the RASGRP family.</text>
</comment>
<comment type="sequence caution" evidence="13">
    <conflict type="frameshift">
        <sequence resource="EMBL-CDS" id="BAE32802"/>
    </conflict>
</comment>
<gene>
    <name type="primary">Rasgrp4</name>
</gene>
<name>GRP4_MOUSE</name>
<evidence type="ECO:0000255" key="1">
    <source>
        <dbReference type="PROSITE-ProRule" id="PRU00135"/>
    </source>
</evidence>
<evidence type="ECO:0000255" key="2">
    <source>
        <dbReference type="PROSITE-ProRule" id="PRU00168"/>
    </source>
</evidence>
<evidence type="ECO:0000255" key="3">
    <source>
        <dbReference type="PROSITE-ProRule" id="PRU00226"/>
    </source>
</evidence>
<evidence type="ECO:0000256" key="4">
    <source>
        <dbReference type="SAM" id="MobiDB-lite"/>
    </source>
</evidence>
<evidence type="ECO:0000269" key="5">
    <source>
    </source>
</evidence>
<evidence type="ECO:0000269" key="6">
    <source>
    </source>
</evidence>
<evidence type="ECO:0000269" key="7">
    <source>
    </source>
</evidence>
<evidence type="ECO:0000269" key="8">
    <source>
    </source>
</evidence>
<evidence type="ECO:0000269" key="9">
    <source>
    </source>
</evidence>
<evidence type="ECO:0000303" key="10">
    <source>
    </source>
</evidence>
<evidence type="ECO:0000303" key="11">
    <source>
    </source>
</evidence>
<evidence type="ECO:0000303" key="12">
    <source>
    </source>
</evidence>
<evidence type="ECO:0000305" key="13"/>
<evidence type="ECO:0000305" key="14">
    <source>
    </source>
</evidence>
<reference key="1">
    <citation type="journal article" date="2002" name="J. Biol. Chem.">
        <title>RasGRP4, a new mast cell-restricted Ras guanine nucleotide-releasing protein with calcium- and diacylglycerol-binding motifs. Identification of defective variants of this signaling protein in asthma, mastocytosis, and mast cell leukemia patients and demonstration of the importance of RasGRP4 in mast cell development and function.</title>
        <authorList>
            <person name="Yang Y."/>
            <person name="Li L."/>
            <person name="Wong G.W."/>
            <person name="Krilis S.A."/>
            <person name="Madhusudhan M.S."/>
            <person name="Sali A."/>
            <person name="Stevens R.L."/>
        </authorList>
    </citation>
    <scope>NUCLEOTIDE SEQUENCE [MRNA] (ISOFORMS 1 AND 2)</scope>
    <scope>SUBCELLULAR LOCATION</scope>
    <scope>TISSUE SPECIFICITY</scope>
    <source>
        <strain>BALB/cJ</strain>
        <tissue>Mast cell</tissue>
    </source>
</reference>
<reference key="2">
    <citation type="journal article" date="2003" name="J. Immunol.">
        <title>Mast cells in airway hyporesponsive C3H/HeJ mice express a unique isoform of the signaling protein Ras guanine nucleotide releasing protein 4 that is unresponsive to diacylglycerol and phorbol esters.</title>
        <authorList>
            <person name="Li L."/>
            <person name="Yang Y."/>
            <person name="Wong G.W."/>
            <person name="Stevens R.L."/>
        </authorList>
    </citation>
    <scope>NUCLEOTIDE SEQUENCE [MRNA] (ISOFORM 4)</scope>
    <scope>FUNCTION</scope>
    <scope>SUBCELLULAR LOCATION</scope>
    <scope>ACTIVITY REGULATION</scope>
    <scope>TISSUE SPECIFICITY</scope>
    <scope>DEVELOPMENTAL STAGE</scope>
    <source>
        <strain>C3H/HeJ</strain>
    </source>
</reference>
<reference key="3">
    <citation type="journal article" date="2005" name="Science">
        <title>The transcriptional landscape of the mammalian genome.</title>
        <authorList>
            <person name="Carninci P."/>
            <person name="Kasukawa T."/>
            <person name="Katayama S."/>
            <person name="Gough J."/>
            <person name="Frith M.C."/>
            <person name="Maeda N."/>
            <person name="Oyama R."/>
            <person name="Ravasi T."/>
            <person name="Lenhard B."/>
            <person name="Wells C."/>
            <person name="Kodzius R."/>
            <person name="Shimokawa K."/>
            <person name="Bajic V.B."/>
            <person name="Brenner S.E."/>
            <person name="Batalov S."/>
            <person name="Forrest A.R."/>
            <person name="Zavolan M."/>
            <person name="Davis M.J."/>
            <person name="Wilming L.G."/>
            <person name="Aidinis V."/>
            <person name="Allen J.E."/>
            <person name="Ambesi-Impiombato A."/>
            <person name="Apweiler R."/>
            <person name="Aturaliya R.N."/>
            <person name="Bailey T.L."/>
            <person name="Bansal M."/>
            <person name="Baxter L."/>
            <person name="Beisel K.W."/>
            <person name="Bersano T."/>
            <person name="Bono H."/>
            <person name="Chalk A.M."/>
            <person name="Chiu K.P."/>
            <person name="Choudhary V."/>
            <person name="Christoffels A."/>
            <person name="Clutterbuck D.R."/>
            <person name="Crowe M.L."/>
            <person name="Dalla E."/>
            <person name="Dalrymple B.P."/>
            <person name="de Bono B."/>
            <person name="Della Gatta G."/>
            <person name="di Bernardo D."/>
            <person name="Down T."/>
            <person name="Engstrom P."/>
            <person name="Fagiolini M."/>
            <person name="Faulkner G."/>
            <person name="Fletcher C.F."/>
            <person name="Fukushima T."/>
            <person name="Furuno M."/>
            <person name="Futaki S."/>
            <person name="Gariboldi M."/>
            <person name="Georgii-Hemming P."/>
            <person name="Gingeras T.R."/>
            <person name="Gojobori T."/>
            <person name="Green R.E."/>
            <person name="Gustincich S."/>
            <person name="Harbers M."/>
            <person name="Hayashi Y."/>
            <person name="Hensch T.K."/>
            <person name="Hirokawa N."/>
            <person name="Hill D."/>
            <person name="Huminiecki L."/>
            <person name="Iacono M."/>
            <person name="Ikeo K."/>
            <person name="Iwama A."/>
            <person name="Ishikawa T."/>
            <person name="Jakt M."/>
            <person name="Kanapin A."/>
            <person name="Katoh M."/>
            <person name="Kawasawa Y."/>
            <person name="Kelso J."/>
            <person name="Kitamura H."/>
            <person name="Kitano H."/>
            <person name="Kollias G."/>
            <person name="Krishnan S.P."/>
            <person name="Kruger A."/>
            <person name="Kummerfeld S.K."/>
            <person name="Kurochkin I.V."/>
            <person name="Lareau L.F."/>
            <person name="Lazarevic D."/>
            <person name="Lipovich L."/>
            <person name="Liu J."/>
            <person name="Liuni S."/>
            <person name="McWilliam S."/>
            <person name="Madan Babu M."/>
            <person name="Madera M."/>
            <person name="Marchionni L."/>
            <person name="Matsuda H."/>
            <person name="Matsuzawa S."/>
            <person name="Miki H."/>
            <person name="Mignone F."/>
            <person name="Miyake S."/>
            <person name="Morris K."/>
            <person name="Mottagui-Tabar S."/>
            <person name="Mulder N."/>
            <person name="Nakano N."/>
            <person name="Nakauchi H."/>
            <person name="Ng P."/>
            <person name="Nilsson R."/>
            <person name="Nishiguchi S."/>
            <person name="Nishikawa S."/>
            <person name="Nori F."/>
            <person name="Ohara O."/>
            <person name="Okazaki Y."/>
            <person name="Orlando V."/>
            <person name="Pang K.C."/>
            <person name="Pavan W.J."/>
            <person name="Pavesi G."/>
            <person name="Pesole G."/>
            <person name="Petrovsky N."/>
            <person name="Piazza S."/>
            <person name="Reed J."/>
            <person name="Reid J.F."/>
            <person name="Ring B.Z."/>
            <person name="Ringwald M."/>
            <person name="Rost B."/>
            <person name="Ruan Y."/>
            <person name="Salzberg S.L."/>
            <person name="Sandelin A."/>
            <person name="Schneider C."/>
            <person name="Schoenbach C."/>
            <person name="Sekiguchi K."/>
            <person name="Semple C.A."/>
            <person name="Seno S."/>
            <person name="Sessa L."/>
            <person name="Sheng Y."/>
            <person name="Shibata Y."/>
            <person name="Shimada H."/>
            <person name="Shimada K."/>
            <person name="Silva D."/>
            <person name="Sinclair B."/>
            <person name="Sperling S."/>
            <person name="Stupka E."/>
            <person name="Sugiura K."/>
            <person name="Sultana R."/>
            <person name="Takenaka Y."/>
            <person name="Taki K."/>
            <person name="Tammoja K."/>
            <person name="Tan S.L."/>
            <person name="Tang S."/>
            <person name="Taylor M.S."/>
            <person name="Tegner J."/>
            <person name="Teichmann S.A."/>
            <person name="Ueda H.R."/>
            <person name="van Nimwegen E."/>
            <person name="Verardo R."/>
            <person name="Wei C.L."/>
            <person name="Yagi K."/>
            <person name="Yamanishi H."/>
            <person name="Zabarovsky E."/>
            <person name="Zhu S."/>
            <person name="Zimmer A."/>
            <person name="Hide W."/>
            <person name="Bult C."/>
            <person name="Grimmond S.M."/>
            <person name="Teasdale R.D."/>
            <person name="Liu E.T."/>
            <person name="Brusic V."/>
            <person name="Quackenbush J."/>
            <person name="Wahlestedt C."/>
            <person name="Mattick J.S."/>
            <person name="Hume D.A."/>
            <person name="Kai C."/>
            <person name="Sasaki D."/>
            <person name="Tomaru Y."/>
            <person name="Fukuda S."/>
            <person name="Kanamori-Katayama M."/>
            <person name="Suzuki M."/>
            <person name="Aoki J."/>
            <person name="Arakawa T."/>
            <person name="Iida J."/>
            <person name="Imamura K."/>
            <person name="Itoh M."/>
            <person name="Kato T."/>
            <person name="Kawaji H."/>
            <person name="Kawagashira N."/>
            <person name="Kawashima T."/>
            <person name="Kojima M."/>
            <person name="Kondo S."/>
            <person name="Konno H."/>
            <person name="Nakano K."/>
            <person name="Ninomiya N."/>
            <person name="Nishio T."/>
            <person name="Okada M."/>
            <person name="Plessy C."/>
            <person name="Shibata K."/>
            <person name="Shiraki T."/>
            <person name="Suzuki S."/>
            <person name="Tagami M."/>
            <person name="Waki K."/>
            <person name="Watahiki A."/>
            <person name="Okamura-Oho Y."/>
            <person name="Suzuki H."/>
            <person name="Kawai J."/>
            <person name="Hayashizaki Y."/>
        </authorList>
    </citation>
    <scope>NUCLEOTIDE SEQUENCE [LARGE SCALE MRNA] (ISOFORMS 1 AND 3)</scope>
    <source>
        <strain>C57BL/6J</strain>
        <strain>NOD</strain>
        <tissue>Bone</tissue>
        <tissue>Dendritic cell</tissue>
        <tissue>Embryo</tissue>
        <tissue>Ovary</tissue>
    </source>
</reference>
<reference key="4">
    <citation type="journal article" date="2007" name="Biochem. J.">
        <title>Differential membrane binding and diacylglycerol recognition by C1 domains of RasGRPs.</title>
        <authorList>
            <person name="Johnson J.E."/>
            <person name="Goulding R.E."/>
            <person name="Ding Z."/>
            <person name="Partovi A."/>
            <person name="Anthony K.V."/>
            <person name="Beaulieu N."/>
            <person name="Tazmini G."/>
            <person name="Cornell R.B."/>
            <person name="Kay R.J."/>
        </authorList>
    </citation>
    <scope>FUNCTION (ISOFORMS 1 AND 2)</scope>
    <scope>SUBCELLULAR LOCATION</scope>
</reference>
<reference key="5">
    <citation type="journal article" date="2012" name="EMBO J.">
        <title>GPCR activation of Ras and PI3Kc in neutrophils depends on PLCb2/b3 and the RasGEF RasGRP4.</title>
        <authorList>
            <person name="Suire S."/>
            <person name="Lecureuil C."/>
            <person name="Anderson K.E."/>
            <person name="Damoulakis G."/>
            <person name="Niewczas I."/>
            <person name="Davidson K."/>
            <person name="Guillou H."/>
            <person name="Pan D."/>
            <person name="Clark J."/>
            <person name="Hawkins P.T."/>
            <person name="Stephens L."/>
        </authorList>
    </citation>
    <scope>FUNCTION</scope>
    <scope>TISSUE SPECIFICITY (ISOFORM 1)</scope>
</reference>
<reference key="6">
    <citation type="journal article" date="2016" name="PLoS ONE">
        <title>CD117+ Dendritic and Mast Cells Are Dependent on RasGRP4 to Function as Accessory Cells for Optimal Natural Killer Cell-Mediated Responses to Lipopolysaccharide.</title>
        <authorList>
            <person name="Zhou S."/>
            <person name="Tanaka K."/>
            <person name="O'Keeffe M."/>
            <person name="Qi M."/>
            <person name="El-Assaad F."/>
            <person name="Weaver J.C."/>
            <person name="Chen G."/>
            <person name="Weatherall C."/>
            <person name="Wang Y."/>
            <person name="Giannakopoulos B."/>
            <person name="Chen L."/>
            <person name="Yu D."/>
            <person name="Hamilton M.J."/>
            <person name="Wensing L.A."/>
            <person name="Stevens R.L."/>
            <person name="Krilis S.A."/>
        </authorList>
    </citation>
    <scope>FUNCTION</scope>
    <scope>TISSUE SPECIFICITY</scope>
    <scope>INDUCTION</scope>
</reference>
<dbReference type="EMBL" id="AF331457">
    <property type="protein sequence ID" value="AAK84299.1"/>
    <property type="molecule type" value="mRNA"/>
</dbReference>
<dbReference type="EMBL" id="AY040628">
    <property type="protein sequence ID" value="AAK81694.1"/>
    <property type="molecule type" value="mRNA"/>
</dbReference>
<dbReference type="EMBL" id="AY196476">
    <property type="protein sequence ID" value="AAO20841.1"/>
    <property type="molecule type" value="mRNA"/>
</dbReference>
<dbReference type="EMBL" id="AK049562">
    <property type="protein sequence ID" value="BAC33811.1"/>
    <property type="molecule type" value="mRNA"/>
</dbReference>
<dbReference type="EMBL" id="AK089282">
    <property type="protein sequence ID" value="BAC40827.1"/>
    <property type="molecule type" value="mRNA"/>
</dbReference>
<dbReference type="EMBL" id="AK154746">
    <property type="protein sequence ID" value="BAE32802.1"/>
    <property type="status" value="ALT_FRAME"/>
    <property type="molecule type" value="mRNA"/>
</dbReference>
<dbReference type="EMBL" id="AK162667">
    <property type="protein sequence ID" value="BAE37013.1"/>
    <property type="molecule type" value="mRNA"/>
</dbReference>
<dbReference type="EMBL" id="AK165106">
    <property type="protein sequence ID" value="BAE38037.1"/>
    <property type="molecule type" value="mRNA"/>
</dbReference>
<dbReference type="CCDS" id="CCDS85257.1">
    <molecule id="Q8BTM9-1"/>
</dbReference>
<dbReference type="CCDS" id="CCDS85258.1">
    <molecule id="Q8BTM9-2"/>
</dbReference>
<dbReference type="RefSeq" id="NP_001167626.1">
    <molecule id="Q8BTM9-2"/>
    <property type="nucleotide sequence ID" value="NM_001174155.1"/>
</dbReference>
<dbReference type="RefSeq" id="NP_660131.2">
    <molecule id="Q8BTM9-1"/>
    <property type="nucleotide sequence ID" value="NM_145149.4"/>
</dbReference>
<dbReference type="SMR" id="Q8BTM9"/>
<dbReference type="BioGRID" id="231357">
    <property type="interactions" value="1"/>
</dbReference>
<dbReference type="FunCoup" id="Q8BTM9">
    <property type="interactions" value="645"/>
</dbReference>
<dbReference type="IntAct" id="Q8BTM9">
    <property type="interactions" value="2"/>
</dbReference>
<dbReference type="STRING" id="10090.ENSMUSP00000125137"/>
<dbReference type="iPTMnet" id="Q8BTM9"/>
<dbReference type="PhosphoSitePlus" id="Q8BTM9"/>
<dbReference type="PaxDb" id="10090-ENSMUSP00000092200"/>
<dbReference type="ProteomicsDB" id="271308">
    <molecule id="Q8BTM9-1"/>
</dbReference>
<dbReference type="ProteomicsDB" id="271309">
    <molecule id="Q8BTM9-2"/>
</dbReference>
<dbReference type="ProteomicsDB" id="271310">
    <molecule id="Q8BTM9-3"/>
</dbReference>
<dbReference type="ProteomicsDB" id="271311">
    <molecule id="Q8BTM9-4"/>
</dbReference>
<dbReference type="Antibodypedia" id="30068">
    <property type="antibodies" value="78 antibodies from 20 providers"/>
</dbReference>
<dbReference type="DNASU" id="233046"/>
<dbReference type="Ensembl" id="ENSMUST00000032811.12">
    <molecule id="Q8BTM9-1"/>
    <property type="protein sequence ID" value="ENSMUSP00000032811.6"/>
    <property type="gene ID" value="ENSMUSG00000030589.17"/>
</dbReference>
<dbReference type="Ensembl" id="ENSMUST00000159351.3">
    <molecule id="Q8BTM9-4"/>
    <property type="protein sequence ID" value="ENSMUSP00000124183.2"/>
    <property type="gene ID" value="ENSMUSG00000030589.17"/>
</dbReference>
<dbReference type="Ensembl" id="ENSMUST00000159975.8">
    <molecule id="Q8BTM9-2"/>
    <property type="protein sequence ID" value="ENSMUSP00000125137.2"/>
    <property type="gene ID" value="ENSMUSG00000030589.17"/>
</dbReference>
<dbReference type="GeneID" id="233046"/>
<dbReference type="KEGG" id="mmu:233046"/>
<dbReference type="UCSC" id="uc009gas.2">
    <molecule id="Q8BTM9-1"/>
    <property type="organism name" value="mouse"/>
</dbReference>
<dbReference type="UCSC" id="uc009gat.1">
    <molecule id="Q8BTM9-3"/>
    <property type="organism name" value="mouse"/>
</dbReference>
<dbReference type="UCSC" id="uc012fha.1">
    <molecule id="Q8BTM9-2"/>
    <property type="organism name" value="mouse"/>
</dbReference>
<dbReference type="AGR" id="MGI:2386851"/>
<dbReference type="CTD" id="115727"/>
<dbReference type="MGI" id="MGI:2386851">
    <property type="gene designation" value="Rasgrp4"/>
</dbReference>
<dbReference type="VEuPathDB" id="HostDB:ENSMUSG00000030589"/>
<dbReference type="eggNOG" id="KOG3417">
    <property type="taxonomic scope" value="Eukaryota"/>
</dbReference>
<dbReference type="GeneTree" id="ENSGT00940000159883"/>
<dbReference type="HOGENOM" id="CLU_019261_2_1_1"/>
<dbReference type="InParanoid" id="Q8BTM9"/>
<dbReference type="OMA" id="ICHKQCK"/>
<dbReference type="PhylomeDB" id="Q8BTM9"/>
<dbReference type="Reactome" id="R-MMU-5673001">
    <property type="pathway name" value="RAF/MAP kinase cascade"/>
</dbReference>
<dbReference type="BioGRID-ORCS" id="233046">
    <property type="hits" value="1 hit in 38 CRISPR screens"/>
</dbReference>
<dbReference type="PRO" id="PR:Q8BTM9"/>
<dbReference type="Proteomes" id="UP000000589">
    <property type="component" value="Chromosome 7"/>
</dbReference>
<dbReference type="RNAct" id="Q8BTM9">
    <property type="molecule type" value="protein"/>
</dbReference>
<dbReference type="Bgee" id="ENSMUSG00000030589">
    <property type="expression patterns" value="Expressed in granulocyte and 53 other cell types or tissues"/>
</dbReference>
<dbReference type="ExpressionAtlas" id="Q8BTM9">
    <property type="expression patterns" value="baseline and differential"/>
</dbReference>
<dbReference type="GO" id="GO:0009898">
    <property type="term" value="C:cytoplasmic side of plasma membrane"/>
    <property type="evidence" value="ECO:0000314"/>
    <property type="project" value="UniProtKB"/>
</dbReference>
<dbReference type="GO" id="GO:0005829">
    <property type="term" value="C:cytosol"/>
    <property type="evidence" value="ECO:0007669"/>
    <property type="project" value="Ensembl"/>
</dbReference>
<dbReference type="GO" id="GO:0005654">
    <property type="term" value="C:nucleoplasm"/>
    <property type="evidence" value="ECO:0007669"/>
    <property type="project" value="Ensembl"/>
</dbReference>
<dbReference type="GO" id="GO:0019992">
    <property type="term" value="F:diacylglycerol binding"/>
    <property type="evidence" value="ECO:0000314"/>
    <property type="project" value="UniProtKB"/>
</dbReference>
<dbReference type="GO" id="GO:0005085">
    <property type="term" value="F:guanyl-nucleotide exchange factor activity"/>
    <property type="evidence" value="ECO:0000250"/>
    <property type="project" value="UniProtKB"/>
</dbReference>
<dbReference type="GO" id="GO:0008270">
    <property type="term" value="F:zinc ion binding"/>
    <property type="evidence" value="ECO:0007669"/>
    <property type="project" value="UniProtKB-KW"/>
</dbReference>
<dbReference type="GO" id="GO:0140367">
    <property type="term" value="P:antibacterial innate immune response"/>
    <property type="evidence" value="ECO:0000315"/>
    <property type="project" value="UniProtKB"/>
</dbReference>
<dbReference type="GO" id="GO:0030154">
    <property type="term" value="P:cell differentiation"/>
    <property type="evidence" value="ECO:0007669"/>
    <property type="project" value="UniProtKB-KW"/>
</dbReference>
<dbReference type="GO" id="GO:0007200">
    <property type="term" value="P:phospholipase C-activating G protein-coupled receptor signaling pathway"/>
    <property type="evidence" value="ECO:0000315"/>
    <property type="project" value="UniProtKB"/>
</dbReference>
<dbReference type="GO" id="GO:0002717">
    <property type="term" value="P:positive regulation of natural killer cell mediated immunity"/>
    <property type="evidence" value="ECO:0000315"/>
    <property type="project" value="UniProtKB"/>
</dbReference>
<dbReference type="GO" id="GO:0007264">
    <property type="term" value="P:small GTPase-mediated signal transduction"/>
    <property type="evidence" value="ECO:0007669"/>
    <property type="project" value="InterPro"/>
</dbReference>
<dbReference type="CDD" id="cd00155">
    <property type="entry name" value="RasGEF"/>
    <property type="match status" value="1"/>
</dbReference>
<dbReference type="FunFam" id="1.10.238.10:FF:000114">
    <property type="entry name" value="RAS guanyl releasing protein 4"/>
    <property type="match status" value="1"/>
</dbReference>
<dbReference type="FunFam" id="1.20.870.10:FF:000009">
    <property type="entry name" value="RAS guanyl releasing protein 4"/>
    <property type="match status" value="1"/>
</dbReference>
<dbReference type="FunFam" id="3.30.60.20:FF:000037">
    <property type="entry name" value="RAS guanyl releasing protein 4"/>
    <property type="match status" value="1"/>
</dbReference>
<dbReference type="FunFam" id="1.10.840.10:FF:000003">
    <property type="entry name" value="Ras guanyl-releasing protein 3 isoform 1"/>
    <property type="match status" value="1"/>
</dbReference>
<dbReference type="Gene3D" id="3.30.60.20">
    <property type="match status" value="1"/>
</dbReference>
<dbReference type="Gene3D" id="1.10.238.10">
    <property type="entry name" value="EF-hand"/>
    <property type="match status" value="1"/>
</dbReference>
<dbReference type="Gene3D" id="1.10.840.10">
    <property type="entry name" value="Ras guanine-nucleotide exchange factors catalytic domain"/>
    <property type="match status" value="1"/>
</dbReference>
<dbReference type="Gene3D" id="1.20.870.10">
    <property type="entry name" value="Son of sevenless (SoS) protein Chain: S domain 1"/>
    <property type="match status" value="1"/>
</dbReference>
<dbReference type="InterPro" id="IPR046349">
    <property type="entry name" value="C1-like_sf"/>
</dbReference>
<dbReference type="InterPro" id="IPR020454">
    <property type="entry name" value="DAG/PE-bd"/>
</dbReference>
<dbReference type="InterPro" id="IPR002219">
    <property type="entry name" value="PE/DAG-bd"/>
</dbReference>
<dbReference type="InterPro" id="IPR008937">
    <property type="entry name" value="Ras-like_GEF"/>
</dbReference>
<dbReference type="InterPro" id="IPR000651">
    <property type="entry name" value="Ras-like_Gua-exchang_fac_N"/>
</dbReference>
<dbReference type="InterPro" id="IPR023578">
    <property type="entry name" value="Ras_GEF_dom_sf"/>
</dbReference>
<dbReference type="InterPro" id="IPR001895">
    <property type="entry name" value="RASGEF_cat_dom"/>
</dbReference>
<dbReference type="InterPro" id="IPR036964">
    <property type="entry name" value="RASGEF_cat_dom_sf"/>
</dbReference>
<dbReference type="PANTHER" id="PTHR23113">
    <property type="entry name" value="GUANINE NUCLEOTIDE EXCHANGE FACTOR"/>
    <property type="match status" value="1"/>
</dbReference>
<dbReference type="PANTHER" id="PTHR23113:SF157">
    <property type="entry name" value="RAS GUANYL-RELEASING PROTEIN 4"/>
    <property type="match status" value="1"/>
</dbReference>
<dbReference type="Pfam" id="PF00130">
    <property type="entry name" value="C1_1"/>
    <property type="match status" value="1"/>
</dbReference>
<dbReference type="Pfam" id="PF00617">
    <property type="entry name" value="RasGEF"/>
    <property type="match status" value="1"/>
</dbReference>
<dbReference type="PRINTS" id="PR00008">
    <property type="entry name" value="DAGPEDOMAIN"/>
</dbReference>
<dbReference type="SMART" id="SM00109">
    <property type="entry name" value="C1"/>
    <property type="match status" value="1"/>
</dbReference>
<dbReference type="SMART" id="SM00147">
    <property type="entry name" value="RasGEF"/>
    <property type="match status" value="1"/>
</dbReference>
<dbReference type="SUPFAM" id="SSF57889">
    <property type="entry name" value="Cysteine-rich domain"/>
    <property type="match status" value="1"/>
</dbReference>
<dbReference type="SUPFAM" id="SSF48366">
    <property type="entry name" value="Ras GEF"/>
    <property type="match status" value="1"/>
</dbReference>
<dbReference type="PROSITE" id="PS50009">
    <property type="entry name" value="RASGEF_CAT"/>
    <property type="match status" value="1"/>
</dbReference>
<dbReference type="PROSITE" id="PS50212">
    <property type="entry name" value="RASGEF_NTER"/>
    <property type="match status" value="1"/>
</dbReference>
<dbReference type="PROSITE" id="PS00479">
    <property type="entry name" value="ZF_DAG_PE_1"/>
    <property type="match status" value="1"/>
</dbReference>
<dbReference type="PROSITE" id="PS50081">
    <property type="entry name" value="ZF_DAG_PE_2"/>
    <property type="match status" value="1"/>
</dbReference>
<keyword id="KW-0025">Alternative splicing</keyword>
<keyword id="KW-0106">Calcium</keyword>
<keyword id="KW-1003">Cell membrane</keyword>
<keyword id="KW-0963">Cytoplasm</keyword>
<keyword id="KW-0221">Differentiation</keyword>
<keyword id="KW-0344">Guanine-nucleotide releasing factor</keyword>
<keyword id="KW-0446">Lipid-binding</keyword>
<keyword id="KW-0472">Membrane</keyword>
<keyword id="KW-0479">Metal-binding</keyword>
<keyword id="KW-1185">Reference proteome</keyword>
<keyword id="KW-0862">Zinc</keyword>
<keyword id="KW-0863">Zinc-finger</keyword>
<protein>
    <recommendedName>
        <fullName>RAS guanyl-releasing protein 4</fullName>
    </recommendedName>
</protein>
<feature type="chain" id="PRO_0000315214" description="RAS guanyl-releasing protein 4">
    <location>
        <begin position="1"/>
        <end position="673"/>
    </location>
</feature>
<feature type="domain" description="N-terminal Ras-GEF" evidence="1">
    <location>
        <begin position="49"/>
        <end position="175"/>
    </location>
</feature>
<feature type="domain" description="Ras-GEF" evidence="2">
    <location>
        <begin position="201"/>
        <end position="432"/>
    </location>
</feature>
<feature type="domain" description="EF-hand">
    <location>
        <begin position="466"/>
        <end position="501"/>
    </location>
</feature>
<feature type="zinc finger region" description="Phorbol-ester/DAG-type" evidence="3">
    <location>
        <begin position="540"/>
        <end position="590"/>
    </location>
</feature>
<feature type="region of interest" description="Disordered" evidence="4">
    <location>
        <begin position="1"/>
        <end position="34"/>
    </location>
</feature>
<feature type="region of interest" description="Disordered" evidence="4">
    <location>
        <begin position="164"/>
        <end position="188"/>
    </location>
</feature>
<feature type="region of interest" description="Disordered" evidence="4">
    <location>
        <begin position="592"/>
        <end position="633"/>
    </location>
</feature>
<feature type="compositionally biased region" description="Basic residues" evidence="4">
    <location>
        <begin position="1"/>
        <end position="10"/>
    </location>
</feature>
<feature type="compositionally biased region" description="Basic residues" evidence="4">
    <location>
        <begin position="20"/>
        <end position="32"/>
    </location>
</feature>
<feature type="compositionally biased region" description="Low complexity" evidence="4">
    <location>
        <begin position="164"/>
        <end position="173"/>
    </location>
</feature>
<feature type="splice variant" id="VSP_030483" description="In isoform 2." evidence="10">
    <original>F</original>
    <variation>FVSTGP</variation>
    <location>
        <position position="560"/>
    </location>
</feature>
<feature type="splice variant" id="VSP_030484" description="In isoform 3." evidence="12">
    <original>LWGVTKQGYRCRDCGLCCHRHCRDQVRVECKKRPETKGDPGPPGAPVPATS</original>
    <variation>VSTGPVSTLGSHLPWIVSAPHTLTWDSVGTGFWWWWGLQKCPHLRYSTEFI</variation>
    <location>
        <begin position="561"/>
        <end position="611"/>
    </location>
</feature>
<feature type="splice variant" id="VSP_030485" description="In isoform 4." evidence="11">
    <original>CGLCC</original>
    <variation>TAGIK</variation>
    <location>
        <begin position="574"/>
        <end position="578"/>
    </location>
</feature>
<feature type="splice variant" id="VSP_030486" description="In isoform 4." evidence="11">
    <location>
        <begin position="579"/>
        <end position="673"/>
    </location>
</feature>
<feature type="splice variant" id="VSP_030487" description="In isoform 3." evidence="12">
    <location>
        <begin position="612"/>
        <end position="673"/>
    </location>
</feature>
<feature type="sequence conflict" description="In Ref. 1; AAK81694/AAK84299." evidence="13" ref="1">
    <original>M</original>
    <variation>I</variation>
    <location>
        <position position="182"/>
    </location>
</feature>
<feature type="sequence conflict" description="In Ref. 1; AAK81694/AAK84299." evidence="13" ref="1">
    <original>K</original>
    <variation>R</variation>
    <location>
        <position position="443"/>
    </location>
</feature>
<feature type="sequence conflict" description="In Ref. 1; AAK81694/AAK84299." evidence="13" ref="1">
    <original>E</original>
    <variation>G</variation>
    <location>
        <position position="468"/>
    </location>
</feature>
<accession>Q8BTM9</accession>
<accession>Q3TNQ1</accession>
<accession>Q3TRL5</accession>
<accession>Q3U3I4</accession>
<accession>Q811P7</accession>
<accession>Q8BKV7</accession>
<accession>Q91ZC8</accession>
<accession>Q920A2</accession>
<organism>
    <name type="scientific">Mus musculus</name>
    <name type="common">Mouse</name>
    <dbReference type="NCBI Taxonomy" id="10090"/>
    <lineage>
        <taxon>Eukaryota</taxon>
        <taxon>Metazoa</taxon>
        <taxon>Chordata</taxon>
        <taxon>Craniata</taxon>
        <taxon>Vertebrata</taxon>
        <taxon>Euteleostomi</taxon>
        <taxon>Mammalia</taxon>
        <taxon>Eutheria</taxon>
        <taxon>Euarchontoglires</taxon>
        <taxon>Glires</taxon>
        <taxon>Rodentia</taxon>
        <taxon>Myomorpha</taxon>
        <taxon>Muroidea</taxon>
        <taxon>Muridae</taxon>
        <taxon>Murinae</taxon>
        <taxon>Mus</taxon>
        <taxon>Mus</taxon>
    </lineage>
</organism>